<dbReference type="EC" id="6.3.5.-" evidence="1"/>
<dbReference type="EMBL" id="CP000010">
    <property type="protein sequence ID" value="AAU48987.1"/>
    <property type="molecule type" value="Genomic_DNA"/>
</dbReference>
<dbReference type="RefSeq" id="WP_004190092.1">
    <property type="nucleotide sequence ID" value="NC_006348.1"/>
</dbReference>
<dbReference type="RefSeq" id="YP_102004.1">
    <property type="nucleotide sequence ID" value="NC_006348.1"/>
</dbReference>
<dbReference type="SMR" id="Q62MR3"/>
<dbReference type="GeneID" id="92977943"/>
<dbReference type="KEGG" id="bma:BMA0165"/>
<dbReference type="PATRIC" id="fig|243160.12.peg.163"/>
<dbReference type="eggNOG" id="COG0064">
    <property type="taxonomic scope" value="Bacteria"/>
</dbReference>
<dbReference type="HOGENOM" id="CLU_019240_0_0_4"/>
<dbReference type="Proteomes" id="UP000006693">
    <property type="component" value="Chromosome 1"/>
</dbReference>
<dbReference type="GO" id="GO:0050566">
    <property type="term" value="F:asparaginyl-tRNA synthase (glutamine-hydrolyzing) activity"/>
    <property type="evidence" value="ECO:0007669"/>
    <property type="project" value="RHEA"/>
</dbReference>
<dbReference type="GO" id="GO:0005524">
    <property type="term" value="F:ATP binding"/>
    <property type="evidence" value="ECO:0007669"/>
    <property type="project" value="UniProtKB-KW"/>
</dbReference>
<dbReference type="GO" id="GO:0050567">
    <property type="term" value="F:glutaminyl-tRNA synthase (glutamine-hydrolyzing) activity"/>
    <property type="evidence" value="ECO:0007669"/>
    <property type="project" value="UniProtKB-UniRule"/>
</dbReference>
<dbReference type="GO" id="GO:0070681">
    <property type="term" value="P:glutaminyl-tRNAGln biosynthesis via transamidation"/>
    <property type="evidence" value="ECO:0007669"/>
    <property type="project" value="TreeGrafter"/>
</dbReference>
<dbReference type="GO" id="GO:0006412">
    <property type="term" value="P:translation"/>
    <property type="evidence" value="ECO:0007669"/>
    <property type="project" value="UniProtKB-UniRule"/>
</dbReference>
<dbReference type="FunFam" id="1.10.10.410:FF:000001">
    <property type="entry name" value="Aspartyl/glutamyl-tRNA(Asn/Gln) amidotransferase subunit B"/>
    <property type="match status" value="1"/>
</dbReference>
<dbReference type="FunFam" id="1.10.150.380:FF:000001">
    <property type="entry name" value="Aspartyl/glutamyl-tRNA(Asn/Gln) amidotransferase subunit B"/>
    <property type="match status" value="1"/>
</dbReference>
<dbReference type="Gene3D" id="1.10.10.410">
    <property type="match status" value="1"/>
</dbReference>
<dbReference type="Gene3D" id="1.10.150.380">
    <property type="entry name" value="GatB domain, N-terminal subdomain"/>
    <property type="match status" value="1"/>
</dbReference>
<dbReference type="HAMAP" id="MF_00121">
    <property type="entry name" value="GatB"/>
    <property type="match status" value="1"/>
</dbReference>
<dbReference type="InterPro" id="IPR017959">
    <property type="entry name" value="Asn/Gln-tRNA_amidoTrfase_suB/E"/>
</dbReference>
<dbReference type="InterPro" id="IPR006075">
    <property type="entry name" value="Asn/Gln-tRNA_Trfase_suB/E_cat"/>
</dbReference>
<dbReference type="InterPro" id="IPR018027">
    <property type="entry name" value="Asn/Gln_amidotransferase"/>
</dbReference>
<dbReference type="InterPro" id="IPR003789">
    <property type="entry name" value="Asn/Gln_tRNA_amidoTrase-B-like"/>
</dbReference>
<dbReference type="InterPro" id="IPR004413">
    <property type="entry name" value="GatB"/>
</dbReference>
<dbReference type="InterPro" id="IPR042114">
    <property type="entry name" value="GatB_C_1"/>
</dbReference>
<dbReference type="InterPro" id="IPR023168">
    <property type="entry name" value="GatB_Yqey_C_2"/>
</dbReference>
<dbReference type="InterPro" id="IPR017958">
    <property type="entry name" value="Gln-tRNA_amidoTrfase_suB_CS"/>
</dbReference>
<dbReference type="InterPro" id="IPR014746">
    <property type="entry name" value="Gln_synth/guanido_kin_cat_dom"/>
</dbReference>
<dbReference type="NCBIfam" id="TIGR00133">
    <property type="entry name" value="gatB"/>
    <property type="match status" value="1"/>
</dbReference>
<dbReference type="NCBIfam" id="NF004012">
    <property type="entry name" value="PRK05477.1-2"/>
    <property type="match status" value="1"/>
</dbReference>
<dbReference type="NCBIfam" id="NF004014">
    <property type="entry name" value="PRK05477.1-4"/>
    <property type="match status" value="1"/>
</dbReference>
<dbReference type="NCBIfam" id="NF004015">
    <property type="entry name" value="PRK05477.1-5"/>
    <property type="match status" value="1"/>
</dbReference>
<dbReference type="PANTHER" id="PTHR11659">
    <property type="entry name" value="GLUTAMYL-TRNA GLN AMIDOTRANSFERASE SUBUNIT B MITOCHONDRIAL AND PROKARYOTIC PET112-RELATED"/>
    <property type="match status" value="1"/>
</dbReference>
<dbReference type="PANTHER" id="PTHR11659:SF0">
    <property type="entry name" value="GLUTAMYL-TRNA(GLN) AMIDOTRANSFERASE SUBUNIT B, MITOCHONDRIAL"/>
    <property type="match status" value="1"/>
</dbReference>
<dbReference type="Pfam" id="PF02934">
    <property type="entry name" value="GatB_N"/>
    <property type="match status" value="1"/>
</dbReference>
<dbReference type="Pfam" id="PF02637">
    <property type="entry name" value="GatB_Yqey"/>
    <property type="match status" value="1"/>
</dbReference>
<dbReference type="SMART" id="SM00845">
    <property type="entry name" value="GatB_Yqey"/>
    <property type="match status" value="1"/>
</dbReference>
<dbReference type="SUPFAM" id="SSF89095">
    <property type="entry name" value="GatB/YqeY motif"/>
    <property type="match status" value="1"/>
</dbReference>
<dbReference type="SUPFAM" id="SSF55931">
    <property type="entry name" value="Glutamine synthetase/guanido kinase"/>
    <property type="match status" value="1"/>
</dbReference>
<dbReference type="PROSITE" id="PS01234">
    <property type="entry name" value="GATB"/>
    <property type="match status" value="1"/>
</dbReference>
<accession>Q62MR3</accession>
<keyword id="KW-0067">ATP-binding</keyword>
<keyword id="KW-0436">Ligase</keyword>
<keyword id="KW-0547">Nucleotide-binding</keyword>
<keyword id="KW-0648">Protein biosynthesis</keyword>
<keyword id="KW-1185">Reference proteome</keyword>
<gene>
    <name evidence="1" type="primary">gatB</name>
    <name type="ordered locus">BMA0165</name>
</gene>
<protein>
    <recommendedName>
        <fullName evidence="1">Aspartyl/glutamyl-tRNA(Asn/Gln) amidotransferase subunit B</fullName>
        <shortName evidence="1">Asp/Glu-ADT subunit B</shortName>
        <ecNumber evidence="1">6.3.5.-</ecNumber>
    </recommendedName>
</protein>
<name>GATB_BURMA</name>
<comment type="function">
    <text evidence="1">Allows the formation of correctly charged Asn-tRNA(Asn) or Gln-tRNA(Gln) through the transamidation of misacylated Asp-tRNA(Asn) or Glu-tRNA(Gln) in organisms which lack either or both of asparaginyl-tRNA or glutaminyl-tRNA synthetases. The reaction takes place in the presence of glutamine and ATP through an activated phospho-Asp-tRNA(Asn) or phospho-Glu-tRNA(Gln).</text>
</comment>
<comment type="catalytic activity">
    <reaction evidence="1">
        <text>L-glutamyl-tRNA(Gln) + L-glutamine + ATP + H2O = L-glutaminyl-tRNA(Gln) + L-glutamate + ADP + phosphate + H(+)</text>
        <dbReference type="Rhea" id="RHEA:17521"/>
        <dbReference type="Rhea" id="RHEA-COMP:9681"/>
        <dbReference type="Rhea" id="RHEA-COMP:9684"/>
        <dbReference type="ChEBI" id="CHEBI:15377"/>
        <dbReference type="ChEBI" id="CHEBI:15378"/>
        <dbReference type="ChEBI" id="CHEBI:29985"/>
        <dbReference type="ChEBI" id="CHEBI:30616"/>
        <dbReference type="ChEBI" id="CHEBI:43474"/>
        <dbReference type="ChEBI" id="CHEBI:58359"/>
        <dbReference type="ChEBI" id="CHEBI:78520"/>
        <dbReference type="ChEBI" id="CHEBI:78521"/>
        <dbReference type="ChEBI" id="CHEBI:456216"/>
    </reaction>
</comment>
<comment type="catalytic activity">
    <reaction evidence="1">
        <text>L-aspartyl-tRNA(Asn) + L-glutamine + ATP + H2O = L-asparaginyl-tRNA(Asn) + L-glutamate + ADP + phosphate + 2 H(+)</text>
        <dbReference type="Rhea" id="RHEA:14513"/>
        <dbReference type="Rhea" id="RHEA-COMP:9674"/>
        <dbReference type="Rhea" id="RHEA-COMP:9677"/>
        <dbReference type="ChEBI" id="CHEBI:15377"/>
        <dbReference type="ChEBI" id="CHEBI:15378"/>
        <dbReference type="ChEBI" id="CHEBI:29985"/>
        <dbReference type="ChEBI" id="CHEBI:30616"/>
        <dbReference type="ChEBI" id="CHEBI:43474"/>
        <dbReference type="ChEBI" id="CHEBI:58359"/>
        <dbReference type="ChEBI" id="CHEBI:78515"/>
        <dbReference type="ChEBI" id="CHEBI:78516"/>
        <dbReference type="ChEBI" id="CHEBI:456216"/>
    </reaction>
</comment>
<comment type="subunit">
    <text evidence="1">Heterotrimer of A, B and C subunits.</text>
</comment>
<comment type="similarity">
    <text evidence="1">Belongs to the GatB/GatE family. GatB subfamily.</text>
</comment>
<evidence type="ECO:0000255" key="1">
    <source>
        <dbReference type="HAMAP-Rule" id="MF_00121"/>
    </source>
</evidence>
<feature type="chain" id="PRO_0000241202" description="Aspartyl/glutamyl-tRNA(Asn/Gln) amidotransferase subunit B">
    <location>
        <begin position="1"/>
        <end position="490"/>
    </location>
</feature>
<proteinExistence type="inferred from homology"/>
<sequence>MTQWEVVIGLETHAQLSTVSKIFSGASTQFGAQPNTQACPVDLALPGVLPVLNRGAVERAIRFGLAIGATVAPRSVFARKNYFYPDLPKGYQISQYEIPVVQGGQITIQVPANEKAGKQAYSKTVNLTRAHLEEDAGKSLHEDFAGMTGIDLNRAGTPLLEIVTEPEMRSAAEAVAYAKALHGLVMWLGICDGNMQEGSFRCDANVSVRPVGQEKFGTRAEIKNLNSFRFLEDAINYEVRRQIELIEDGGEVVQETRLYDPDKRETRSMRSKEDAHDYRYFPDPDLMPLVIGADWIARVKGEMPELPAVMQQRFIEQYGVSAYDAGVLTSTKAMAEYFEALVAKAGAANAKLAANWLMGDVSSQLNRDGIDIDACPVSAAQLALVLQRIADGTISNKIAKEIFVTIWDEKAADEGAADRIIEAKGLKQISDTGALEAIIDEVLAANAKSVEEFRAGKDKAFNALVGQAMKATKGKANPQQVNELLKKKLG</sequence>
<reference key="1">
    <citation type="journal article" date="2004" name="Proc. Natl. Acad. Sci. U.S.A.">
        <title>Structural flexibility in the Burkholderia mallei genome.</title>
        <authorList>
            <person name="Nierman W.C."/>
            <person name="DeShazer D."/>
            <person name="Kim H.S."/>
            <person name="Tettelin H."/>
            <person name="Nelson K.E."/>
            <person name="Feldblyum T.V."/>
            <person name="Ulrich R.L."/>
            <person name="Ronning C.M."/>
            <person name="Brinkac L.M."/>
            <person name="Daugherty S.C."/>
            <person name="Davidsen T.D."/>
            <person name="DeBoy R.T."/>
            <person name="Dimitrov G."/>
            <person name="Dodson R.J."/>
            <person name="Durkin A.S."/>
            <person name="Gwinn M.L."/>
            <person name="Haft D.H."/>
            <person name="Khouri H.M."/>
            <person name="Kolonay J.F."/>
            <person name="Madupu R."/>
            <person name="Mohammoud Y."/>
            <person name="Nelson W.C."/>
            <person name="Radune D."/>
            <person name="Romero C.M."/>
            <person name="Sarria S."/>
            <person name="Selengut J."/>
            <person name="Shamblin C."/>
            <person name="Sullivan S.A."/>
            <person name="White O."/>
            <person name="Yu Y."/>
            <person name="Zafar N."/>
            <person name="Zhou L."/>
            <person name="Fraser C.M."/>
        </authorList>
    </citation>
    <scope>NUCLEOTIDE SEQUENCE [LARGE SCALE GENOMIC DNA]</scope>
    <source>
        <strain>ATCC 23344</strain>
    </source>
</reference>
<organism>
    <name type="scientific">Burkholderia mallei (strain ATCC 23344)</name>
    <dbReference type="NCBI Taxonomy" id="243160"/>
    <lineage>
        <taxon>Bacteria</taxon>
        <taxon>Pseudomonadati</taxon>
        <taxon>Pseudomonadota</taxon>
        <taxon>Betaproteobacteria</taxon>
        <taxon>Burkholderiales</taxon>
        <taxon>Burkholderiaceae</taxon>
        <taxon>Burkholderia</taxon>
        <taxon>pseudomallei group</taxon>
    </lineage>
</organism>